<proteinExistence type="evidence at protein level"/>
<comment type="function">
    <text evidence="3">Catalyzes the condensation of ATP and 5-phosphoribose 1-diphosphate to form N'-(5'-phosphoribosyl)-ATP (PR-ATP). Has a crucial role in the pathway because the rate of histidine biosynthesis seems to be controlled primarily by regulation of HisG enzymatic activity.</text>
</comment>
<comment type="catalytic activity">
    <reaction evidence="3">
        <text>1-(5-phospho-beta-D-ribosyl)-ATP + diphosphate = 5-phospho-alpha-D-ribose 1-diphosphate + ATP</text>
        <dbReference type="Rhea" id="RHEA:18473"/>
        <dbReference type="ChEBI" id="CHEBI:30616"/>
        <dbReference type="ChEBI" id="CHEBI:33019"/>
        <dbReference type="ChEBI" id="CHEBI:58017"/>
        <dbReference type="ChEBI" id="CHEBI:73183"/>
        <dbReference type="EC" id="2.4.2.17"/>
    </reaction>
</comment>
<comment type="cofactor">
    <cofactor evidence="6">
        <name>Mg(2+)</name>
        <dbReference type="ChEBI" id="CHEBI:18420"/>
    </cofactor>
</comment>
<comment type="activity regulation">
    <text evidence="1 3">Feedback inhibited by histidine. Also inhibited by AMP and PR-ATP.</text>
</comment>
<comment type="pathway">
    <text evidence="3">Amino-acid biosynthesis; L-histidine biosynthesis; L-histidine from 5-phospho-alpha-D-ribose 1-diphosphate: step 1/9.</text>
</comment>
<comment type="subunit">
    <text evidence="1 2 4">Equilibrium between an active dimeric form, an inactive hexameric form and higher aggregates. Interconversion between the various forms is largely reversible and is influenced by the natural substrates and inhibitors of the enzyme.</text>
</comment>
<comment type="subcellular location">
    <subcellularLocation>
        <location>Cytoplasm</location>
    </subcellularLocation>
</comment>
<comment type="similarity">
    <text evidence="5">Belongs to the ATP phosphoribosyltransferase family. Long subfamily.</text>
</comment>
<dbReference type="EC" id="2.4.2.17"/>
<dbReference type="EMBL" id="X13462">
    <property type="protein sequence ID" value="CAA31811.1"/>
    <property type="molecule type" value="Genomic_DNA"/>
</dbReference>
<dbReference type="EMBL" id="X63697">
    <property type="protein sequence ID" value="CAA45224.1"/>
    <property type="molecule type" value="Genomic_DNA"/>
</dbReference>
<dbReference type="EMBL" id="U02070">
    <property type="protein sequence ID" value="AAA19742.1"/>
    <property type="molecule type" value="Unassigned_DNA"/>
</dbReference>
<dbReference type="EMBL" id="U00096">
    <property type="protein sequence ID" value="AAC75080.1"/>
    <property type="molecule type" value="Genomic_DNA"/>
</dbReference>
<dbReference type="EMBL" id="AP009048">
    <property type="protein sequence ID" value="BAA15850.1"/>
    <property type="molecule type" value="Genomic_DNA"/>
</dbReference>
<dbReference type="EMBL" id="V00284">
    <property type="protein sequence ID" value="CAA23549.1"/>
    <property type="molecule type" value="Genomic_DNA"/>
</dbReference>
<dbReference type="PIR" id="B64967">
    <property type="entry name" value="XREC"/>
</dbReference>
<dbReference type="RefSeq" id="NP_416523.1">
    <property type="nucleotide sequence ID" value="NC_000913.3"/>
</dbReference>
<dbReference type="RefSeq" id="WP_000131782.1">
    <property type="nucleotide sequence ID" value="NZ_STEB01000048.1"/>
</dbReference>
<dbReference type="PDB" id="1H3D">
    <property type="method" value="X-ray"/>
    <property type="resolution" value="2.70 A"/>
    <property type="chains" value="A=1-299"/>
</dbReference>
<dbReference type="PDB" id="1Q1K">
    <property type="method" value="X-ray"/>
    <property type="resolution" value="2.90 A"/>
    <property type="chains" value="A=1-299"/>
</dbReference>
<dbReference type="PDBsum" id="1H3D"/>
<dbReference type="PDBsum" id="1Q1K"/>
<dbReference type="SMR" id="P60757"/>
<dbReference type="BioGRID" id="4263530">
    <property type="interactions" value="26"/>
</dbReference>
<dbReference type="FunCoup" id="P60757">
    <property type="interactions" value="662"/>
</dbReference>
<dbReference type="IntAct" id="P60757">
    <property type="interactions" value="1"/>
</dbReference>
<dbReference type="STRING" id="511145.b2019"/>
<dbReference type="DrugBank" id="DB01661">
    <property type="generic name" value="1-(5-phospho-D-ribosyl)-ATP"/>
</dbReference>
<dbReference type="jPOST" id="P60757"/>
<dbReference type="PaxDb" id="511145-b2019"/>
<dbReference type="EnsemblBacteria" id="AAC75080">
    <property type="protein sequence ID" value="AAC75080"/>
    <property type="gene ID" value="b2019"/>
</dbReference>
<dbReference type="GeneID" id="93775154"/>
<dbReference type="GeneID" id="946549"/>
<dbReference type="KEGG" id="ecj:JW2001"/>
<dbReference type="KEGG" id="eco:b2019"/>
<dbReference type="KEGG" id="ecoc:C3026_11385"/>
<dbReference type="PATRIC" id="fig|1411691.4.peg.233"/>
<dbReference type="EchoBASE" id="EB0444"/>
<dbReference type="eggNOG" id="COG0040">
    <property type="taxonomic scope" value="Bacteria"/>
</dbReference>
<dbReference type="HOGENOM" id="CLU_038115_1_0_6"/>
<dbReference type="InParanoid" id="P60757"/>
<dbReference type="OMA" id="YVMMDYD"/>
<dbReference type="OrthoDB" id="9801867at2"/>
<dbReference type="PhylomeDB" id="P60757"/>
<dbReference type="BioCyc" id="EcoCyc:ATPPHOSRIBOSTRANS-MONOMER"/>
<dbReference type="BioCyc" id="MetaCyc:ATPPHOSRIBOSTRANS-MONOMER"/>
<dbReference type="BRENDA" id="2.4.2.17">
    <property type="organism ID" value="2026"/>
</dbReference>
<dbReference type="UniPathway" id="UPA00031">
    <property type="reaction ID" value="UER00006"/>
</dbReference>
<dbReference type="EvolutionaryTrace" id="P60757"/>
<dbReference type="PRO" id="PR:P60757"/>
<dbReference type="Proteomes" id="UP000000625">
    <property type="component" value="Chromosome"/>
</dbReference>
<dbReference type="GO" id="GO:0005829">
    <property type="term" value="C:cytosol"/>
    <property type="evidence" value="ECO:0000314"/>
    <property type="project" value="EcoCyc"/>
</dbReference>
<dbReference type="GO" id="GO:0005524">
    <property type="term" value="F:ATP binding"/>
    <property type="evidence" value="ECO:0007669"/>
    <property type="project" value="UniProtKB-KW"/>
</dbReference>
<dbReference type="GO" id="GO:0003879">
    <property type="term" value="F:ATP phosphoribosyltransferase activity"/>
    <property type="evidence" value="ECO:0000314"/>
    <property type="project" value="EcoCyc"/>
</dbReference>
<dbReference type="GO" id="GO:0000287">
    <property type="term" value="F:magnesium ion binding"/>
    <property type="evidence" value="ECO:0007669"/>
    <property type="project" value="UniProtKB-UniRule"/>
</dbReference>
<dbReference type="GO" id="GO:0000105">
    <property type="term" value="P:L-histidine biosynthetic process"/>
    <property type="evidence" value="ECO:0000315"/>
    <property type="project" value="EcoCyc"/>
</dbReference>
<dbReference type="CDD" id="cd13592">
    <property type="entry name" value="PBP2_HisGL2"/>
    <property type="match status" value="1"/>
</dbReference>
<dbReference type="FunFam" id="3.30.70.120:FF:000002">
    <property type="entry name" value="ATP phosphoribosyltransferase"/>
    <property type="match status" value="1"/>
</dbReference>
<dbReference type="FunFam" id="3.40.190.10:FF:000008">
    <property type="entry name" value="ATP phosphoribosyltransferase"/>
    <property type="match status" value="1"/>
</dbReference>
<dbReference type="Gene3D" id="3.30.70.120">
    <property type="match status" value="1"/>
</dbReference>
<dbReference type="Gene3D" id="3.40.190.10">
    <property type="entry name" value="Periplasmic binding protein-like II"/>
    <property type="match status" value="2"/>
</dbReference>
<dbReference type="HAMAP" id="MF_00079">
    <property type="entry name" value="HisG_Long"/>
    <property type="match status" value="1"/>
</dbReference>
<dbReference type="InterPro" id="IPR020621">
    <property type="entry name" value="ATP-PRT_HisG_long"/>
</dbReference>
<dbReference type="InterPro" id="IPR013820">
    <property type="entry name" value="ATP_PRibTrfase_cat"/>
</dbReference>
<dbReference type="InterPro" id="IPR018198">
    <property type="entry name" value="ATP_PRibTrfase_CS"/>
</dbReference>
<dbReference type="InterPro" id="IPR001348">
    <property type="entry name" value="ATP_PRibTrfase_HisG"/>
</dbReference>
<dbReference type="InterPro" id="IPR013115">
    <property type="entry name" value="HisG_C"/>
</dbReference>
<dbReference type="InterPro" id="IPR011322">
    <property type="entry name" value="N-reg_PII-like_a/b"/>
</dbReference>
<dbReference type="InterPro" id="IPR015867">
    <property type="entry name" value="N-reg_PII/ATP_PRibTrfase_C"/>
</dbReference>
<dbReference type="NCBIfam" id="TIGR00070">
    <property type="entry name" value="hisG"/>
    <property type="match status" value="1"/>
</dbReference>
<dbReference type="NCBIfam" id="TIGR03455">
    <property type="entry name" value="HisG_C-term"/>
    <property type="match status" value="1"/>
</dbReference>
<dbReference type="PANTHER" id="PTHR21403:SF8">
    <property type="entry name" value="ATP PHOSPHORIBOSYLTRANSFERASE"/>
    <property type="match status" value="1"/>
</dbReference>
<dbReference type="PANTHER" id="PTHR21403">
    <property type="entry name" value="ATP PHOSPHORIBOSYLTRANSFERASE ATP-PRTASE"/>
    <property type="match status" value="1"/>
</dbReference>
<dbReference type="Pfam" id="PF01634">
    <property type="entry name" value="HisG"/>
    <property type="match status" value="1"/>
</dbReference>
<dbReference type="Pfam" id="PF08029">
    <property type="entry name" value="HisG_C"/>
    <property type="match status" value="1"/>
</dbReference>
<dbReference type="SUPFAM" id="SSF54913">
    <property type="entry name" value="GlnB-like"/>
    <property type="match status" value="1"/>
</dbReference>
<dbReference type="SUPFAM" id="SSF53850">
    <property type="entry name" value="Periplasmic binding protein-like II"/>
    <property type="match status" value="1"/>
</dbReference>
<dbReference type="PROSITE" id="PS01316">
    <property type="entry name" value="ATP_P_PHORIBOSYLTR"/>
    <property type="match status" value="1"/>
</dbReference>
<reference key="1">
    <citation type="journal article" date="1988" name="J. Mol. Biol.">
        <title>Structure and function of the Salmonella typhimurium and Escherichia coli K-12 histidine operons.</title>
        <authorList>
            <person name="Carlomagno M.S."/>
            <person name="Chiariotti L."/>
            <person name="Alifano P."/>
            <person name="Nappo A.G."/>
            <person name="Bruni C.B."/>
        </authorList>
    </citation>
    <scope>NUCLEOTIDE SEQUENCE [GENOMIC DNA]</scope>
    <source>
        <strain>K12</strain>
    </source>
</reference>
<reference key="2">
    <citation type="journal article" date="1994" name="J. Mol. Biol.">
        <title>Nucleotide sequence of the Escherichia coli K12 histidine operon revisited.</title>
        <authorList>
            <person name="Jovanovic G."/>
            <person name="Kostic T."/>
            <person name="Jankovic M."/>
            <person name="Savic D.J."/>
        </authorList>
    </citation>
    <scope>NUCLEOTIDE SEQUENCE [GENOMIC DNA]</scope>
    <scope>SEQUENCE REVISION</scope>
    <source>
        <strain>K12</strain>
    </source>
</reference>
<reference key="3">
    <citation type="journal article" date="1996" name="DNA Res.">
        <title>A 460-kb DNA sequence of the Escherichia coli K-12 genome corresponding to the 40.1-50.0 min region on the linkage map.</title>
        <authorList>
            <person name="Itoh T."/>
            <person name="Aiba H."/>
            <person name="Baba T."/>
            <person name="Fujita K."/>
            <person name="Hayashi K."/>
            <person name="Inada T."/>
            <person name="Isono K."/>
            <person name="Kasai H."/>
            <person name="Kimura S."/>
            <person name="Kitakawa M."/>
            <person name="Kitagawa M."/>
            <person name="Makino K."/>
            <person name="Miki T."/>
            <person name="Mizobuchi K."/>
            <person name="Mori H."/>
            <person name="Mori T."/>
            <person name="Motomura K."/>
            <person name="Nakade S."/>
            <person name="Nakamura Y."/>
            <person name="Nashimoto H."/>
            <person name="Nishio Y."/>
            <person name="Oshima T."/>
            <person name="Saito N."/>
            <person name="Sampei G."/>
            <person name="Seki Y."/>
            <person name="Sivasundaram S."/>
            <person name="Tagami H."/>
            <person name="Takeda J."/>
            <person name="Takemoto K."/>
            <person name="Wada C."/>
            <person name="Yamamoto Y."/>
            <person name="Horiuchi T."/>
        </authorList>
    </citation>
    <scope>NUCLEOTIDE SEQUENCE [LARGE SCALE GENOMIC DNA]</scope>
    <source>
        <strain>K12 / W3110 / ATCC 27325 / DSM 5911</strain>
    </source>
</reference>
<reference key="4">
    <citation type="journal article" date="1997" name="Science">
        <title>The complete genome sequence of Escherichia coli K-12.</title>
        <authorList>
            <person name="Blattner F.R."/>
            <person name="Plunkett G. III"/>
            <person name="Bloch C.A."/>
            <person name="Perna N.T."/>
            <person name="Burland V."/>
            <person name="Riley M."/>
            <person name="Collado-Vides J."/>
            <person name="Glasner J.D."/>
            <person name="Rode C.K."/>
            <person name="Mayhew G.F."/>
            <person name="Gregor J."/>
            <person name="Davis N.W."/>
            <person name="Kirkpatrick H.A."/>
            <person name="Goeden M.A."/>
            <person name="Rose D.J."/>
            <person name="Mau B."/>
            <person name="Shao Y."/>
        </authorList>
    </citation>
    <scope>NUCLEOTIDE SEQUENCE [LARGE SCALE GENOMIC DNA]</scope>
    <source>
        <strain>K12 / MG1655 / ATCC 47076</strain>
    </source>
</reference>
<reference key="5">
    <citation type="journal article" date="2006" name="Mol. Syst. Biol.">
        <title>Highly accurate genome sequences of Escherichia coli K-12 strains MG1655 and W3110.</title>
        <authorList>
            <person name="Hayashi K."/>
            <person name="Morooka N."/>
            <person name="Yamamoto Y."/>
            <person name="Fujita K."/>
            <person name="Isono K."/>
            <person name="Choi S."/>
            <person name="Ohtsubo E."/>
            <person name="Baba T."/>
            <person name="Wanner B.L."/>
            <person name="Mori H."/>
            <person name="Horiuchi T."/>
        </authorList>
    </citation>
    <scope>NUCLEOTIDE SEQUENCE [LARGE SCALE GENOMIC DNA]</scope>
    <source>
        <strain>K12 / W3110 / ATCC 27325 / DSM 5911</strain>
    </source>
</reference>
<reference key="6">
    <citation type="journal article" date="1981" name="Nucleic Acids Res.">
        <title>Identification, nucleotide sequence and expression of the regulatory region of the histidine operon of Escherichia coli K-12.</title>
        <authorList>
            <person name="Verde P."/>
            <person name="Frunzio R."/>
            <person name="di Nocera P.P."/>
            <person name="Blasi F."/>
            <person name="Bruni C.B."/>
        </authorList>
    </citation>
    <scope>NUCLEOTIDE SEQUENCE [GENOMIC DNA] OF 1-21</scope>
</reference>
<reference key="7">
    <citation type="journal article" date="1970" name="Biochemistry">
        <title>Regulatory properties of phosphoribosyladenosine triphosphate synthetase. Synergism between adenosine monophosphate, phosphoribosyladenosine triphosphate, and histidine.</title>
        <authorList>
            <person name="Klungsoyr L."/>
            <person name="Atkinson D.E."/>
        </authorList>
    </citation>
    <scope>FUNCTION</scope>
    <scope>CATALYTIC ACTIVITY</scope>
    <scope>COFACTOR</scope>
    <scope>ACTIVITY REGULATION</scope>
    <scope>PATHWAY</scope>
</reference>
<reference key="8">
    <citation type="journal article" date="1971" name="Biochim. Biophys. Acta">
        <title>Sedimentation behaviour of phosphoribosyladenosine triphosphate synthetase. Effects of substrates and modifiers.</title>
        <authorList>
            <person name="Klungsoeyr L."/>
            <person name="Kryvi H."/>
        </authorList>
    </citation>
    <scope>SUBUNIT</scope>
</reference>
<reference key="9">
    <citation type="journal article" date="1973" name="Experientia">
        <title>Studies on the quaternary structure of the first enzyme for histidine biosynthesis.</title>
        <authorList>
            <person name="Tebar A.R."/>
            <person name="Fernandez V.M."/>
            <person name="Martin Del Rio R."/>
            <person name="Ballesteros A.O."/>
        </authorList>
    </citation>
    <scope>SUBUNIT</scope>
    <source>
        <strain>K12</strain>
    </source>
</reference>
<reference key="10">
    <citation type="journal article" date="2000" name="Acta Crystallogr. D">
        <title>Purification, crystallization and preliminary X-ray crystallographic analysis of ATP-phosphoribosyltransferase from Escherichia coli.</title>
        <authorList>
            <person name="Lohkamp B."/>
            <person name="Coggins J.R."/>
            <person name="Lapthorn A.J."/>
        </authorList>
    </citation>
    <scope>CRYSTALLIZATION</scope>
</reference>
<reference key="11">
    <citation type="journal article" date="2004" name="J. Mol. Biol.">
        <title>The structure of Escherichia coli ATP-phosphoribosyltransferase: identification of substrate binding sites and mode of AMP inhibition.</title>
        <authorList>
            <person name="Lohkamp B."/>
            <person name="McDermott G."/>
            <person name="Campbell S.A."/>
            <person name="Coggins J.R."/>
            <person name="Lapthorn A.J."/>
        </authorList>
    </citation>
    <scope>X-RAY CRYSTALLOGRAPHY (2.7 ANGSTROMS) IN COMPLEX WITH AMP AND PR-ATP</scope>
    <scope>ACTIVITY REGULATION</scope>
</reference>
<accession>P60757</accession>
<accession>P10366</accession>
<organism>
    <name type="scientific">Escherichia coli (strain K12)</name>
    <dbReference type="NCBI Taxonomy" id="83333"/>
    <lineage>
        <taxon>Bacteria</taxon>
        <taxon>Pseudomonadati</taxon>
        <taxon>Pseudomonadota</taxon>
        <taxon>Gammaproteobacteria</taxon>
        <taxon>Enterobacterales</taxon>
        <taxon>Enterobacteriaceae</taxon>
        <taxon>Escherichia</taxon>
    </lineage>
</organism>
<protein>
    <recommendedName>
        <fullName>ATP phosphoribosyltransferase</fullName>
        <shortName>ATP-PRT</shortName>
        <shortName>ATP-PRTase</shortName>
        <ecNumber>2.4.2.17</ecNumber>
    </recommendedName>
</protein>
<evidence type="ECO:0000269" key="1">
    <source>
    </source>
</evidence>
<evidence type="ECO:0000269" key="2">
    <source>
    </source>
</evidence>
<evidence type="ECO:0000269" key="3">
    <source>
    </source>
</evidence>
<evidence type="ECO:0000269" key="4">
    <source>
    </source>
</evidence>
<evidence type="ECO:0000305" key="5"/>
<evidence type="ECO:0000305" key="6">
    <source>
    </source>
</evidence>
<evidence type="ECO:0007829" key="7">
    <source>
        <dbReference type="PDB" id="1H3D"/>
    </source>
</evidence>
<name>HIS1_ECOLI</name>
<keyword id="KW-0002">3D-structure</keyword>
<keyword id="KW-0028">Amino-acid biosynthesis</keyword>
<keyword id="KW-0067">ATP-binding</keyword>
<keyword id="KW-0963">Cytoplasm</keyword>
<keyword id="KW-0328">Glycosyltransferase</keyword>
<keyword id="KW-0368">Histidine biosynthesis</keyword>
<keyword id="KW-0460">Magnesium</keyword>
<keyword id="KW-0479">Metal-binding</keyword>
<keyword id="KW-0547">Nucleotide-binding</keyword>
<keyword id="KW-1185">Reference proteome</keyword>
<keyword id="KW-0808">Transferase</keyword>
<feature type="chain" id="PRO_0000151848" description="ATP phosphoribosyltransferase">
    <location>
        <begin position="1"/>
        <end position="299"/>
    </location>
</feature>
<feature type="sequence conflict" description="In Ref. 6; CAA23549." evidence="5" ref="6">
    <original>R</original>
    <variation>P</variation>
    <location>
        <position position="6"/>
    </location>
</feature>
<feature type="sequence conflict" description="In Ref. 1; CAA31811." evidence="5" ref="1">
    <original>DI</original>
    <variation>GV</variation>
    <location>
        <begin position="49"/>
        <end position="50"/>
    </location>
</feature>
<feature type="sequence conflict" description="In Ref. 1; CAA31811." evidence="5" ref="1">
    <original>V</original>
    <variation>A</variation>
    <location>
        <position position="263"/>
    </location>
</feature>
<feature type="strand" evidence="7">
    <location>
        <begin position="7"/>
        <end position="15"/>
    </location>
</feature>
<feature type="helix" evidence="7">
    <location>
        <begin position="18"/>
        <end position="27"/>
    </location>
</feature>
<feature type="strand" evidence="7">
    <location>
        <begin position="35"/>
        <end position="37"/>
    </location>
</feature>
<feature type="strand" evidence="7">
    <location>
        <begin position="39"/>
        <end position="42"/>
    </location>
</feature>
<feature type="strand" evidence="7">
    <location>
        <begin position="44"/>
        <end position="53"/>
    </location>
</feature>
<feature type="helix" evidence="7">
    <location>
        <begin position="55"/>
        <end position="57"/>
    </location>
</feature>
<feature type="helix" evidence="7">
    <location>
        <begin position="58"/>
        <end position="63"/>
    </location>
</feature>
<feature type="strand" evidence="7">
    <location>
        <begin position="66"/>
        <end position="73"/>
    </location>
</feature>
<feature type="helix" evidence="7">
    <location>
        <begin position="74"/>
        <end position="86"/>
    </location>
</feature>
<feature type="strand" evidence="7">
    <location>
        <begin position="93"/>
        <end position="98"/>
    </location>
</feature>
<feature type="strand" evidence="7">
    <location>
        <begin position="104"/>
        <end position="111"/>
    </location>
</feature>
<feature type="helix" evidence="7">
    <location>
        <begin position="119"/>
        <end position="122"/>
    </location>
</feature>
<feature type="strand" evidence="7">
    <location>
        <begin position="126"/>
        <end position="130"/>
    </location>
</feature>
<feature type="helix" evidence="7">
    <location>
        <begin position="132"/>
        <end position="142"/>
    </location>
</feature>
<feature type="strand" evidence="7">
    <location>
        <begin position="147"/>
        <end position="150"/>
    </location>
</feature>
<feature type="helix" evidence="7">
    <location>
        <begin position="155"/>
        <end position="157"/>
    </location>
</feature>
<feature type="helix" evidence="7">
    <location>
        <begin position="159"/>
        <end position="161"/>
    </location>
</feature>
<feature type="strand" evidence="7">
    <location>
        <begin position="165"/>
        <end position="173"/>
    </location>
</feature>
<feature type="helix" evidence="7">
    <location>
        <begin position="175"/>
        <end position="179"/>
    </location>
</feature>
<feature type="strand" evidence="7">
    <location>
        <begin position="182"/>
        <end position="191"/>
    </location>
</feature>
<feature type="strand" evidence="7">
    <location>
        <begin position="193"/>
        <end position="200"/>
    </location>
</feature>
<feature type="helix" evidence="7">
    <location>
        <begin position="204"/>
        <end position="225"/>
    </location>
</feature>
<feature type="strand" evidence="7">
    <location>
        <begin position="227"/>
        <end position="230"/>
    </location>
</feature>
<feature type="turn" evidence="7">
    <location>
        <begin position="235"/>
        <end position="237"/>
    </location>
</feature>
<feature type="helix" evidence="7">
    <location>
        <begin position="238"/>
        <end position="244"/>
    </location>
</feature>
<feature type="strand" evidence="7">
    <location>
        <begin position="265"/>
        <end position="271"/>
    </location>
</feature>
<feature type="helix" evidence="7">
    <location>
        <begin position="275"/>
        <end position="283"/>
    </location>
</feature>
<feature type="strand" evidence="7">
    <location>
        <begin position="290"/>
        <end position="292"/>
    </location>
</feature>
<sequence>MTDNTRLRIAMQKSGRLSDDSRELLARCGIKINLHTQRLIAMAENMPIDILRVRDDDIPGLVMDGVVDLGIIGENVLEEELLNRRAQGEDPRYFTLRRLDFGGCRLSLATPVDEAWDGPLSLNGKRIATSYPHLLKRYLDQKGISFKSCLLNGSVEVAPRAGLADAICDLVSTGATLEANGLREVEVIYRSKACLIQRDGEMEESKQQLIDKLLTRIQGVIQARESKYIMMHAPTERLDEVIALLPGAERPTILPLAGDQQRVAMHMVSSETLFWETMEKLKALGASSILVLPIEKMME</sequence>
<gene>
    <name type="primary">hisG</name>
    <name type="ordered locus">b2019</name>
    <name type="ordered locus">JW2001</name>
</gene>